<sequence>MSKIEQIAKDLVMPILEKNNFELVDVEYKKEGSHWYLRVYIDKEGGITLDDCQLVSEYLSDRLDEVDPIEHSYILEVSSPGLDRPLKKPRDFERNIGKEIEISLYTPIDKRKKFEGELIEFTGDKIIILYNGERKEFDMKNVSLVKPVIKF</sequence>
<proteinExistence type="inferred from homology"/>
<feature type="chain" id="PRO_1000136802" description="Ribosome maturation factor RimP">
    <location>
        <begin position="1"/>
        <end position="151"/>
    </location>
</feature>
<dbReference type="EMBL" id="CP000923">
    <property type="protein sequence ID" value="ABY92935.1"/>
    <property type="molecule type" value="Genomic_DNA"/>
</dbReference>
<dbReference type="RefSeq" id="WP_009052393.1">
    <property type="nucleotide sequence ID" value="NC_010320.1"/>
</dbReference>
<dbReference type="SMR" id="B0K1E0"/>
<dbReference type="KEGG" id="tex:Teth514_1649"/>
<dbReference type="HOGENOM" id="CLU_070525_2_0_9"/>
<dbReference type="Proteomes" id="UP000002155">
    <property type="component" value="Chromosome"/>
</dbReference>
<dbReference type="GO" id="GO:0005829">
    <property type="term" value="C:cytosol"/>
    <property type="evidence" value="ECO:0007669"/>
    <property type="project" value="TreeGrafter"/>
</dbReference>
<dbReference type="GO" id="GO:0000028">
    <property type="term" value="P:ribosomal small subunit assembly"/>
    <property type="evidence" value="ECO:0007669"/>
    <property type="project" value="TreeGrafter"/>
</dbReference>
<dbReference type="GO" id="GO:0006412">
    <property type="term" value="P:translation"/>
    <property type="evidence" value="ECO:0007669"/>
    <property type="project" value="TreeGrafter"/>
</dbReference>
<dbReference type="CDD" id="cd01734">
    <property type="entry name" value="YlxS_C"/>
    <property type="match status" value="1"/>
</dbReference>
<dbReference type="FunFam" id="3.30.300.70:FF:000001">
    <property type="entry name" value="Ribosome maturation factor RimP"/>
    <property type="match status" value="1"/>
</dbReference>
<dbReference type="Gene3D" id="2.30.30.180">
    <property type="entry name" value="Ribosome maturation factor RimP, C-terminal domain"/>
    <property type="match status" value="1"/>
</dbReference>
<dbReference type="Gene3D" id="3.30.300.70">
    <property type="entry name" value="RimP-like superfamily, N-terminal"/>
    <property type="match status" value="1"/>
</dbReference>
<dbReference type="HAMAP" id="MF_01077">
    <property type="entry name" value="RimP"/>
    <property type="match status" value="1"/>
</dbReference>
<dbReference type="InterPro" id="IPR003728">
    <property type="entry name" value="Ribosome_maturation_RimP"/>
</dbReference>
<dbReference type="InterPro" id="IPR028998">
    <property type="entry name" value="RimP_C"/>
</dbReference>
<dbReference type="InterPro" id="IPR036847">
    <property type="entry name" value="RimP_C_sf"/>
</dbReference>
<dbReference type="InterPro" id="IPR028989">
    <property type="entry name" value="RimP_N"/>
</dbReference>
<dbReference type="InterPro" id="IPR035956">
    <property type="entry name" value="RimP_N_sf"/>
</dbReference>
<dbReference type="NCBIfam" id="NF000928">
    <property type="entry name" value="PRK00092.1-2"/>
    <property type="match status" value="1"/>
</dbReference>
<dbReference type="PANTHER" id="PTHR33867">
    <property type="entry name" value="RIBOSOME MATURATION FACTOR RIMP"/>
    <property type="match status" value="1"/>
</dbReference>
<dbReference type="PANTHER" id="PTHR33867:SF1">
    <property type="entry name" value="RIBOSOME MATURATION FACTOR RIMP"/>
    <property type="match status" value="1"/>
</dbReference>
<dbReference type="Pfam" id="PF17384">
    <property type="entry name" value="DUF150_C"/>
    <property type="match status" value="1"/>
</dbReference>
<dbReference type="Pfam" id="PF02576">
    <property type="entry name" value="RimP_N"/>
    <property type="match status" value="1"/>
</dbReference>
<dbReference type="SUPFAM" id="SSF74942">
    <property type="entry name" value="YhbC-like, C-terminal domain"/>
    <property type="match status" value="1"/>
</dbReference>
<dbReference type="SUPFAM" id="SSF75420">
    <property type="entry name" value="YhbC-like, N-terminal domain"/>
    <property type="match status" value="1"/>
</dbReference>
<gene>
    <name evidence="1" type="primary">rimP</name>
    <name type="ordered locus">Teth514_1649</name>
</gene>
<protein>
    <recommendedName>
        <fullName evidence="1">Ribosome maturation factor RimP</fullName>
    </recommendedName>
</protein>
<evidence type="ECO:0000255" key="1">
    <source>
        <dbReference type="HAMAP-Rule" id="MF_01077"/>
    </source>
</evidence>
<comment type="function">
    <text evidence="1">Required for maturation of 30S ribosomal subunits.</text>
</comment>
<comment type="subcellular location">
    <subcellularLocation>
        <location evidence="1">Cytoplasm</location>
    </subcellularLocation>
</comment>
<comment type="similarity">
    <text evidence="1">Belongs to the RimP family.</text>
</comment>
<organism>
    <name type="scientific">Thermoanaerobacter sp. (strain X514)</name>
    <dbReference type="NCBI Taxonomy" id="399726"/>
    <lineage>
        <taxon>Bacteria</taxon>
        <taxon>Bacillati</taxon>
        <taxon>Bacillota</taxon>
        <taxon>Clostridia</taxon>
        <taxon>Thermoanaerobacterales</taxon>
        <taxon>Thermoanaerobacteraceae</taxon>
        <taxon>Thermoanaerobacter</taxon>
    </lineage>
</organism>
<keyword id="KW-0963">Cytoplasm</keyword>
<keyword id="KW-0690">Ribosome biogenesis</keyword>
<reference key="1">
    <citation type="submission" date="2008-01" db="EMBL/GenBank/DDBJ databases">
        <title>Complete sequence of Thermoanaerobacter sp. X514.</title>
        <authorList>
            <consortium name="US DOE Joint Genome Institute"/>
            <person name="Copeland A."/>
            <person name="Lucas S."/>
            <person name="Lapidus A."/>
            <person name="Barry K."/>
            <person name="Glavina del Rio T."/>
            <person name="Dalin E."/>
            <person name="Tice H."/>
            <person name="Pitluck S."/>
            <person name="Bruce D."/>
            <person name="Goodwin L."/>
            <person name="Saunders E."/>
            <person name="Brettin T."/>
            <person name="Detter J.C."/>
            <person name="Han C."/>
            <person name="Schmutz J."/>
            <person name="Larimer F."/>
            <person name="Land M."/>
            <person name="Hauser L."/>
            <person name="Kyrpides N."/>
            <person name="Kim E."/>
            <person name="Hemme C."/>
            <person name="Fields M.W."/>
            <person name="He Z."/>
            <person name="Zhou J."/>
            <person name="Richardson P."/>
        </authorList>
    </citation>
    <scope>NUCLEOTIDE SEQUENCE [LARGE SCALE GENOMIC DNA]</scope>
    <source>
        <strain>X514</strain>
    </source>
</reference>
<accession>B0K1E0</accession>
<name>RIMP_THEPX</name>